<feature type="chain" id="PRO_0000437720" description="Probable aminotransferase sirI">
    <location>
        <begin position="1"/>
        <end position="413"/>
    </location>
</feature>
<feature type="modified residue" description="N6-(pyridoxal phosphate)lysine" evidence="1">
    <location>
        <position position="255"/>
    </location>
</feature>
<name>SIRI_LEPMC</name>
<proteinExistence type="evidence at transcript level"/>
<keyword id="KW-0032">Aminotransferase</keyword>
<keyword id="KW-0663">Pyridoxal phosphate</keyword>
<keyword id="KW-0808">Transferase</keyword>
<keyword id="KW-0843">Virulence</keyword>
<sequence>MLSQRSQRNTSEIIPRLLREYHQPQAGNIDILDLSQAENSVLRDETLDEIRSAIGKHLNGSNLSYPTGVGGELAARKSLAMFFNDRFNPARSVSPDHIVMTPGASEALETLIFHICDPGEGVLIAAPYWSGLDLALETRSLARIVQVNIPLHEFFEMSSIQYYERALATSPIPIKAILMCNPHNPLGQCYNADVLEGLLGFCQRNKLHYISDEVYGMSVFSDSDKGVTPAFTSILSHATAPGLTSWVHMVYSLSKDFGCSGLRLGAIVTQGNTDLLLGSALITNNKVSSLTSVIVPSLLEPRTTQKLLNQNLRSRLNLNYGKVQRFLENRGLEFVPAKAGLFVFACLGKTRTEKEQLLLIECMKRSGVKLVAGTSFHFEQFCWFRIMFSLPKNIVDVALQRIGDALDETEKLL</sequence>
<dbReference type="EC" id="2.6.1.-" evidence="2"/>
<dbReference type="EMBL" id="AY553235">
    <property type="protein sequence ID" value="AAS92541.1"/>
    <property type="molecule type" value="Genomic_DNA"/>
</dbReference>
<dbReference type="SMR" id="Q6Q887"/>
<dbReference type="OMA" id="YPAFYRD"/>
<dbReference type="GO" id="GO:0030170">
    <property type="term" value="F:pyridoxal phosphate binding"/>
    <property type="evidence" value="ECO:0007669"/>
    <property type="project" value="InterPro"/>
</dbReference>
<dbReference type="GO" id="GO:0008483">
    <property type="term" value="F:transaminase activity"/>
    <property type="evidence" value="ECO:0007669"/>
    <property type="project" value="UniProtKB-KW"/>
</dbReference>
<dbReference type="GO" id="GO:0006520">
    <property type="term" value="P:amino acid metabolic process"/>
    <property type="evidence" value="ECO:0007669"/>
    <property type="project" value="TreeGrafter"/>
</dbReference>
<dbReference type="GO" id="GO:0009058">
    <property type="term" value="P:biosynthetic process"/>
    <property type="evidence" value="ECO:0007669"/>
    <property type="project" value="InterPro"/>
</dbReference>
<dbReference type="CDD" id="cd00609">
    <property type="entry name" value="AAT_like"/>
    <property type="match status" value="1"/>
</dbReference>
<dbReference type="Gene3D" id="3.90.1150.10">
    <property type="entry name" value="Aspartate Aminotransferase, domain 1"/>
    <property type="match status" value="1"/>
</dbReference>
<dbReference type="Gene3D" id="3.40.640.10">
    <property type="entry name" value="Type I PLP-dependent aspartate aminotransferase-like (Major domain)"/>
    <property type="match status" value="1"/>
</dbReference>
<dbReference type="InterPro" id="IPR004839">
    <property type="entry name" value="Aminotransferase_I/II_large"/>
</dbReference>
<dbReference type="InterPro" id="IPR050478">
    <property type="entry name" value="Ethylene_sulfur-biosynth"/>
</dbReference>
<dbReference type="InterPro" id="IPR015424">
    <property type="entry name" value="PyrdxlP-dep_Trfase"/>
</dbReference>
<dbReference type="InterPro" id="IPR015421">
    <property type="entry name" value="PyrdxlP-dep_Trfase_major"/>
</dbReference>
<dbReference type="InterPro" id="IPR015422">
    <property type="entry name" value="PyrdxlP-dep_Trfase_small"/>
</dbReference>
<dbReference type="PANTHER" id="PTHR43795:SF32">
    <property type="entry name" value="AMINOTRANSFERASE GLII-RELATED"/>
    <property type="match status" value="1"/>
</dbReference>
<dbReference type="PANTHER" id="PTHR43795">
    <property type="entry name" value="BIFUNCTIONAL ASPARTATE AMINOTRANSFERASE AND GLUTAMATE/ASPARTATE-PREPHENATE AMINOTRANSFERASE-RELATED"/>
    <property type="match status" value="1"/>
</dbReference>
<dbReference type="Pfam" id="PF00155">
    <property type="entry name" value="Aminotran_1_2"/>
    <property type="match status" value="1"/>
</dbReference>
<dbReference type="PRINTS" id="PR00753">
    <property type="entry name" value="ACCSYNTHASE"/>
</dbReference>
<dbReference type="SUPFAM" id="SSF53383">
    <property type="entry name" value="PLP-dependent transferases"/>
    <property type="match status" value="1"/>
</dbReference>
<reference key="1">
    <citation type="journal article" date="2004" name="Mol. Microbiol.">
        <title>The sirodesmin biosynthetic gene cluster of the plant pathogenic fungus Leptosphaeria maculans.</title>
        <authorList>
            <person name="Gardiner D.M."/>
            <person name="Cozijnsen A.J."/>
            <person name="Wilson L.M."/>
            <person name="Pedras M.S."/>
            <person name="Howlett B.J."/>
        </authorList>
    </citation>
    <scope>NUCLEOTIDE SEQUENCE [GENOMIC DNA]</scope>
    <scope>FUNCTION</scope>
    <scope>INDUCTION</scope>
</reference>
<reference key="2">
    <citation type="journal article" date="2008" name="Mycol. Res.">
        <title>Biosynthetic gene clusters for epipolythiodioxopiperazines in filamentous fungi.</title>
        <authorList>
            <person name="Fox E.M."/>
            <person name="Howlett B.J."/>
        </authorList>
    </citation>
    <scope>FUNCTION</scope>
</reference>
<reference key="3">
    <citation type="journal article" date="2010" name="Microbiology">
        <title>A tyrosine O-prenyltransferase catalyses the first pathway-specific step in the biosynthesis of sirodesmin PL.</title>
        <authorList>
            <person name="Kremer A."/>
            <person name="Li S.M."/>
        </authorList>
    </citation>
    <scope>FUNCTION</scope>
</reference>
<reference key="4">
    <citation type="journal article" date="2011" name="Appl. Microbiol. Biotechnol.">
        <title>The tyrosine O-prenyltransferase SirD catalyzes O-, N-, and C-prenylations.</title>
        <authorList>
            <person name="Zou H.X."/>
            <person name="Xie X."/>
            <person name="Zheng X.D."/>
            <person name="Li S.M."/>
        </authorList>
    </citation>
    <scope>FUNCTION</scope>
</reference>
<reference key="5">
    <citation type="journal article" date="2013" name="ACS Chem. Biol.">
        <title>Tyrosine O-prenyltransferase SirD catalyzes S-, C-, and N-prenylations on tyrosine and tryptophan derivatives.</title>
        <authorList>
            <person name="Rudolf J.D."/>
            <person name="Poulter C.D."/>
        </authorList>
    </citation>
    <scope>FUNCTION</scope>
</reference>
<reference key="6">
    <citation type="journal article" date="2016" name="PLoS ONE">
        <title>The epipolythiodiketopiperazine gene cluster in Claviceps purpurea: dysfunctional cytochrome P450 enzyme prevents formation of the previously unknown clapurines.</title>
        <authorList>
            <person name="Dopstadt J."/>
            <person name="Neubauer L."/>
            <person name="Tudzynski P."/>
            <person name="Humpf H.U."/>
        </authorList>
    </citation>
    <scope>FUNCTION</scope>
</reference>
<comment type="function">
    <text evidence="5 6 7 8 10 11">Probable aminotransferase; part of the gene cluster that mediates the biosynthesis of sirodesmin PL, an epipolythiodioxopiperazine (ETP) characterized by a disulfide bridged cyclic dipeptide and that acts as a phytotoxin which is involved in the blackleg didease of canola (PubMed:15387811, PubMed:18272357, PubMed:19762440). SirD catalyzes the O-prenylation of L-tyrosine (L-Tyr) in the presence of dimethylallyl diphosphate (DMAPP) to yield 4-O-dimethylallyl-L-Tyr, and therefore represents probably the first pathway-specific enzyme in the biosynthesis of sirodesmin PL (PubMed:19762440, PubMed:21038099, PubMed:24083562). 4-O-dimethylallyl-L-Tyr, then undergoes condensation with L-Ser in a reaction catalyzed by the non-ribosomal peptide synthase sirP to form the diketopiperazine (DKP) backbone (PubMed:18272357). Further bishydroxylation of the DKP performed by the cytochrome P450 monooxygenase sirC leads to the production of the intermediate phomamide (PubMed:27390873). This step is essential to form the reactive thiol group required for toxicity of sirodesmin PL (PubMed:27390873). The next steps of sirodesmin biosynthesis are not well understood yet, but some predictions could be made from intermediate compounds identification (PubMed:18272357). Phomamide is converted into phomalizarine via oxidation, probably by sirT (PubMed:18272357). Further oxidation, methylation (by sirM or sirN) and reduction steps convert phomalizarine to deacetyl sirodesmin (PubMed:18272357). Finally, acetyltransferase sirH probably acetylates deacetyl sirodesmin to produce sirodesmin PL (PubMed:18272357).</text>
</comment>
<comment type="cofactor">
    <cofactor evidence="1">
        <name>pyridoxal 5'-phosphate</name>
        <dbReference type="ChEBI" id="CHEBI:597326"/>
    </cofactor>
</comment>
<comment type="pathway">
    <text evidence="10">Mycotoxin biosynthesis.</text>
</comment>
<comment type="induction">
    <text evidence="4">Expression is co-regulated with the other genes from the sirodesmin cluster and corresponds with sirodesmin production (PubMed:15387811).</text>
</comment>
<comment type="similarity">
    <text evidence="3">Belongs to the class-I pyridoxal-phosphate-dependent aminotransferase family.</text>
</comment>
<evidence type="ECO:0000250" key="1">
    <source>
        <dbReference type="UniProtKB" id="P00509"/>
    </source>
</evidence>
<evidence type="ECO:0000250" key="2">
    <source>
        <dbReference type="UniProtKB" id="Q4WMJ9"/>
    </source>
</evidence>
<evidence type="ECO:0000255" key="3"/>
<evidence type="ECO:0000269" key="4">
    <source>
    </source>
</evidence>
<evidence type="ECO:0000269" key="5">
    <source>
    </source>
</evidence>
<evidence type="ECO:0000269" key="6">
    <source>
    </source>
</evidence>
<evidence type="ECO:0000269" key="7">
    <source>
    </source>
</evidence>
<evidence type="ECO:0000269" key="8">
    <source>
    </source>
</evidence>
<evidence type="ECO:0000303" key="9">
    <source>
    </source>
</evidence>
<evidence type="ECO:0000305" key="10">
    <source>
    </source>
</evidence>
<evidence type="ECO:0000305" key="11">
    <source>
    </source>
</evidence>
<accession>Q6Q887</accession>
<gene>
    <name evidence="9" type="primary">sirI</name>
</gene>
<protein>
    <recommendedName>
        <fullName evidence="2">Probable aminotransferase sirI</fullName>
        <ecNumber evidence="2">2.6.1.-</ecNumber>
    </recommendedName>
    <alternativeName>
        <fullName evidence="9">Sirodesmin biosynthesis protein I</fullName>
    </alternativeName>
</protein>
<organism>
    <name type="scientific">Leptosphaeria maculans</name>
    <name type="common">Blackleg fungus</name>
    <name type="synonym">Phoma lingam</name>
    <dbReference type="NCBI Taxonomy" id="5022"/>
    <lineage>
        <taxon>Eukaryota</taxon>
        <taxon>Fungi</taxon>
        <taxon>Dikarya</taxon>
        <taxon>Ascomycota</taxon>
        <taxon>Pezizomycotina</taxon>
        <taxon>Dothideomycetes</taxon>
        <taxon>Pleosporomycetidae</taxon>
        <taxon>Pleosporales</taxon>
        <taxon>Pleosporineae</taxon>
        <taxon>Leptosphaeriaceae</taxon>
        <taxon>Plenodomus</taxon>
        <taxon>Plenodomus lingam/Leptosphaeria maculans species complex</taxon>
    </lineage>
</organism>